<organism>
    <name type="scientific">Homo sapiens</name>
    <name type="common">Human</name>
    <dbReference type="NCBI Taxonomy" id="9606"/>
    <lineage>
        <taxon>Eukaryota</taxon>
        <taxon>Metazoa</taxon>
        <taxon>Chordata</taxon>
        <taxon>Craniata</taxon>
        <taxon>Vertebrata</taxon>
        <taxon>Euteleostomi</taxon>
        <taxon>Mammalia</taxon>
        <taxon>Eutheria</taxon>
        <taxon>Euarchontoglires</taxon>
        <taxon>Primates</taxon>
        <taxon>Haplorrhini</taxon>
        <taxon>Catarrhini</taxon>
        <taxon>Hominidae</taxon>
        <taxon>Homo</taxon>
    </lineage>
</organism>
<protein>
    <recommendedName>
        <fullName evidence="9">tRNA (adenine(37)-N6)-methyltransferase</fullName>
        <ecNumber evidence="7">2.1.1.-</ecNumber>
    </recommendedName>
    <alternativeName>
        <fullName evidence="8 11">tRNA methyltransferase O</fullName>
    </alternativeName>
</protein>
<sequence length="441" mass="48587">MRGLEESGPRPTATPCGCVKPALETGNLLTEPVGYLESCFSAKNGTPRQPSICSYSRACLRIRKRIFNNPEHSLMGLEQFSHVWILFVFHKNGHLSCKAKVQPPRLNGAKTGVFSTRSPHRPNAIGLTLAKLEKVEGGAIYLSGIDMIHGTPVLDIKPYIAEYDSPQNVMEPLADFNLQNNQHTPNTVSQSDSKTDSCDQRQLSGCDEPQPHHSTKRKPKCPEDRTSEENYLTHSDTARIQQAFPMHREIAVDFGLESRRDQSSSVAEEQIGPYCPEKSFSEKGTDKKLERVEGAAVLQGSRAETQPMAPHCPAGRADGAPRSVVPAWVTEAPVATLEVRFTPHAEMDLGQLSSQDVGQASFKYFQSAEEAKRAIEAVLSADPRSVYRRKLCQDRLFYFTVDIAHVTCWFGDGFAEVLRIKPASEPVHMTGPVGSLVSLGS</sequence>
<dbReference type="EC" id="2.1.1.-" evidence="7"/>
<dbReference type="EMBL" id="AK000213">
    <property type="protein sequence ID" value="BAA91013.1"/>
    <property type="molecule type" value="mRNA"/>
</dbReference>
<dbReference type="EMBL" id="AL499604">
    <property type="status" value="NOT_ANNOTATED_CDS"/>
    <property type="molecule type" value="Genomic_DNA"/>
</dbReference>
<dbReference type="EMBL" id="BC002863">
    <property type="protein sequence ID" value="AAH02863.1"/>
    <property type="molecule type" value="mRNA"/>
</dbReference>
<dbReference type="EMBL" id="AF151053">
    <property type="protein sequence ID" value="AAF36139.1"/>
    <property type="status" value="ALT_SEQ"/>
    <property type="molecule type" value="mRNA"/>
</dbReference>
<dbReference type="EMBL" id="X86033">
    <property type="protein sequence ID" value="CAA60025.1"/>
    <property type="molecule type" value="mRNA"/>
</dbReference>
<dbReference type="CCDS" id="CCDS6730.1"/>
<dbReference type="RefSeq" id="NP_001317654.1">
    <property type="nucleotide sequence ID" value="NM_001330725.1"/>
</dbReference>
<dbReference type="RefSeq" id="NP_001358586.1">
    <property type="nucleotide sequence ID" value="NM_001371657.1"/>
</dbReference>
<dbReference type="RefSeq" id="NP_057565.3">
    <property type="nucleotide sequence ID" value="NM_016481.4"/>
</dbReference>
<dbReference type="BioGRID" id="119593">
    <property type="interactions" value="32"/>
</dbReference>
<dbReference type="FunCoup" id="Q9BU70">
    <property type="interactions" value="1289"/>
</dbReference>
<dbReference type="IntAct" id="Q9BU70">
    <property type="interactions" value="32"/>
</dbReference>
<dbReference type="MINT" id="Q9BU70"/>
<dbReference type="STRING" id="9606.ENSP00000364260"/>
<dbReference type="GlyGen" id="Q9BU70">
    <property type="glycosylation" value="1 site, 1 O-linked glycan (1 site)"/>
</dbReference>
<dbReference type="iPTMnet" id="Q9BU70"/>
<dbReference type="PhosphoSitePlus" id="Q9BU70"/>
<dbReference type="BioMuta" id="TRMO"/>
<dbReference type="DMDM" id="152112517"/>
<dbReference type="jPOST" id="Q9BU70"/>
<dbReference type="MassIVE" id="Q9BU70"/>
<dbReference type="PaxDb" id="9606-ENSP00000364260"/>
<dbReference type="PeptideAtlas" id="Q9BU70"/>
<dbReference type="ProteomicsDB" id="79058"/>
<dbReference type="Pumba" id="Q9BU70"/>
<dbReference type="Antibodypedia" id="28898">
    <property type="antibodies" value="162 antibodies from 26 providers"/>
</dbReference>
<dbReference type="DNASU" id="51531"/>
<dbReference type="Ensembl" id="ENST00000375119.8">
    <property type="protein sequence ID" value="ENSP00000364260.3"/>
    <property type="gene ID" value="ENSG00000136932.16"/>
</dbReference>
<dbReference type="GeneID" id="51531"/>
<dbReference type="KEGG" id="hsa:51531"/>
<dbReference type="MANE-Select" id="ENST00000375119.8">
    <property type="protein sequence ID" value="ENSP00000364260.3"/>
    <property type="RefSeq nucleotide sequence ID" value="NM_016481.5"/>
    <property type="RefSeq protein sequence ID" value="NP_057565.3"/>
</dbReference>
<dbReference type="UCSC" id="uc004axv.2">
    <property type="organism name" value="human"/>
</dbReference>
<dbReference type="AGR" id="HGNC:30967"/>
<dbReference type="CTD" id="51531"/>
<dbReference type="DisGeNET" id="51531"/>
<dbReference type="GeneCards" id="TRMO"/>
<dbReference type="HGNC" id="HGNC:30967">
    <property type="gene designation" value="TRMO"/>
</dbReference>
<dbReference type="HPA" id="ENSG00000136932">
    <property type="expression patterns" value="Low tissue specificity"/>
</dbReference>
<dbReference type="neXtProt" id="NX_Q9BU70"/>
<dbReference type="OpenTargets" id="ENSG00000136932"/>
<dbReference type="PharmGKB" id="PA134875112"/>
<dbReference type="VEuPathDB" id="HostDB:ENSG00000136932"/>
<dbReference type="eggNOG" id="KOG2942">
    <property type="taxonomic scope" value="Eukaryota"/>
</dbReference>
<dbReference type="GeneTree" id="ENSGT00390000004643"/>
<dbReference type="HOGENOM" id="CLU_013458_1_0_1"/>
<dbReference type="InParanoid" id="Q9BU70"/>
<dbReference type="OMA" id="IDMIQGT"/>
<dbReference type="OrthoDB" id="4882at2759"/>
<dbReference type="PAN-GO" id="Q9BU70">
    <property type="GO annotations" value="0 GO annotations based on evolutionary models"/>
</dbReference>
<dbReference type="PhylomeDB" id="Q9BU70"/>
<dbReference type="TreeFam" id="TF331670"/>
<dbReference type="PathwayCommons" id="Q9BU70"/>
<dbReference type="SignaLink" id="Q9BU70"/>
<dbReference type="BioGRID-ORCS" id="51531">
    <property type="hits" value="12 hits in 1131 CRISPR screens"/>
</dbReference>
<dbReference type="GenomeRNAi" id="51531"/>
<dbReference type="Pharos" id="Q9BU70">
    <property type="development level" value="Tbio"/>
</dbReference>
<dbReference type="PRO" id="PR:Q9BU70"/>
<dbReference type="Proteomes" id="UP000005640">
    <property type="component" value="Chromosome 9"/>
</dbReference>
<dbReference type="RNAct" id="Q9BU70">
    <property type="molecule type" value="protein"/>
</dbReference>
<dbReference type="Bgee" id="ENSG00000136932">
    <property type="expression patterns" value="Expressed in epithelium of nasopharynx and 179 other cell types or tissues"/>
</dbReference>
<dbReference type="ExpressionAtlas" id="Q9BU70">
    <property type="expression patterns" value="baseline and differential"/>
</dbReference>
<dbReference type="GO" id="GO:0089715">
    <property type="term" value="F:tRNA (L-threonylcarbamoyladenosine(37)-C2) methyltransferase activity"/>
    <property type="evidence" value="ECO:0000314"/>
    <property type="project" value="UniProtKB"/>
</dbReference>
<dbReference type="GO" id="GO:0030488">
    <property type="term" value="P:tRNA methylation"/>
    <property type="evidence" value="ECO:0000314"/>
    <property type="project" value="UniProtKB"/>
</dbReference>
<dbReference type="CDD" id="cd09281">
    <property type="entry name" value="UPF0066"/>
    <property type="match status" value="1"/>
</dbReference>
<dbReference type="FunFam" id="2.40.30.70:FF:000002">
    <property type="entry name" value="tRNA (Adenine(37)-N6)-methyltransferase isoform X1"/>
    <property type="match status" value="1"/>
</dbReference>
<dbReference type="FunFam" id="3.30.2310.10:FF:000002">
    <property type="entry name" value="tRNA methyltransferase O"/>
    <property type="match status" value="1"/>
</dbReference>
<dbReference type="Gene3D" id="2.40.30.70">
    <property type="entry name" value="YaeB-like"/>
    <property type="match status" value="1"/>
</dbReference>
<dbReference type="Gene3D" id="3.30.2310.10">
    <property type="entry name" value="YaeB-like"/>
    <property type="match status" value="1"/>
</dbReference>
<dbReference type="InterPro" id="IPR023370">
    <property type="entry name" value="TrmO-like_N"/>
</dbReference>
<dbReference type="InterPro" id="IPR023368">
    <property type="entry name" value="UPF0066_cons_site"/>
</dbReference>
<dbReference type="InterPro" id="IPR040372">
    <property type="entry name" value="YaeB-like"/>
</dbReference>
<dbReference type="InterPro" id="IPR036413">
    <property type="entry name" value="YaeB-like_sf"/>
</dbReference>
<dbReference type="InterPro" id="IPR036414">
    <property type="entry name" value="YaeB_N_sf"/>
</dbReference>
<dbReference type="NCBIfam" id="TIGR00104">
    <property type="entry name" value="tRNA_TsaA"/>
    <property type="match status" value="1"/>
</dbReference>
<dbReference type="PANTHER" id="PTHR12818">
    <property type="entry name" value="TRNA (ADENINE(37)-N6)-METHYLTRANSFERASE"/>
    <property type="match status" value="1"/>
</dbReference>
<dbReference type="PANTHER" id="PTHR12818:SF0">
    <property type="entry name" value="TRNA (ADENINE(37)-N6)-METHYLTRANSFERASE"/>
    <property type="match status" value="1"/>
</dbReference>
<dbReference type="Pfam" id="PF01980">
    <property type="entry name" value="TrmO_N"/>
    <property type="match status" value="1"/>
</dbReference>
<dbReference type="SUPFAM" id="SSF118196">
    <property type="entry name" value="YaeB-like"/>
    <property type="match status" value="2"/>
</dbReference>
<dbReference type="PROSITE" id="PS01318">
    <property type="entry name" value="TSAA_1"/>
    <property type="match status" value="1"/>
</dbReference>
<dbReference type="PROSITE" id="PS51668">
    <property type="entry name" value="TSAA_2"/>
    <property type="match status" value="1"/>
</dbReference>
<name>TRMO_HUMAN</name>
<gene>
    <name evidence="8 11" type="primary">TRMO</name>
    <name type="synonym">C9orf156</name>
    <name type="ORF">HSPC219</name>
</gene>
<proteinExistence type="evidence at protein level"/>
<keyword id="KW-0489">Methyltransferase</keyword>
<keyword id="KW-1267">Proteomics identification</keyword>
<keyword id="KW-1185">Reference proteome</keyword>
<keyword id="KW-0949">S-adenosyl-L-methionine</keyword>
<keyword id="KW-0808">Transferase</keyword>
<keyword id="KW-0819">tRNA processing</keyword>
<accession>Q9BU70</accession>
<accession>Q5T113</accession>
<accession>Q86SK0</accession>
<accession>Q9NXJ7</accession>
<accession>Q9P0Q7</accession>
<feature type="chain" id="PRO_0000288886" description="tRNA (adenine(37)-N6)-methyltransferase">
    <location>
        <begin position="1"/>
        <end position="441"/>
    </location>
</feature>
<feature type="domain" description="TsaA-like" evidence="3">
    <location>
        <begin position="30"/>
        <end position="168"/>
    </location>
</feature>
<feature type="region of interest" description="Disordered" evidence="4">
    <location>
        <begin position="179"/>
        <end position="231"/>
    </location>
</feature>
<feature type="region of interest" description="Disordered" evidence="4">
    <location>
        <begin position="264"/>
        <end position="284"/>
    </location>
</feature>
<feature type="compositionally biased region" description="Polar residues" evidence="4">
    <location>
        <begin position="179"/>
        <end position="192"/>
    </location>
</feature>
<feature type="binding site" evidence="1">
    <location>
        <begin position="47"/>
        <end position="49"/>
    </location>
    <ligand>
        <name>S-adenosyl-L-methionine</name>
        <dbReference type="ChEBI" id="CHEBI:59789"/>
    </ligand>
</feature>
<feature type="binding site" evidence="1">
    <location>
        <begin position="90"/>
        <end position="91"/>
    </location>
    <ligand>
        <name>S-adenosyl-L-methionine</name>
        <dbReference type="ChEBI" id="CHEBI:59789"/>
    </ligand>
</feature>
<feature type="binding site" evidence="1">
    <location>
        <position position="117"/>
    </location>
    <ligand>
        <name>S-adenosyl-L-methionine</name>
        <dbReference type="ChEBI" id="CHEBI:59789"/>
    </ligand>
</feature>
<feature type="binding site" evidence="1">
    <location>
        <position position="127"/>
    </location>
    <ligand>
        <name>S-adenosyl-L-methionine</name>
        <dbReference type="ChEBI" id="CHEBI:59789"/>
    </ligand>
</feature>
<feature type="binding site" evidence="1">
    <location>
        <begin position="148"/>
        <end position="151"/>
    </location>
    <ligand>
        <name>S-adenosyl-L-methionine</name>
        <dbReference type="ChEBI" id="CHEBI:59789"/>
    </ligand>
</feature>
<feature type="sequence variant" id="VAR_032527" description="In dbSNP:rs3183927." evidence="5 6">
    <original>S</original>
    <variation>P</variation>
    <location>
        <position position="7"/>
    </location>
</feature>
<feature type="sequence variant" id="VAR_032528" description="In dbSNP:rs35606344.">
    <original>V</original>
    <variation>A</variation>
    <location>
        <position position="252"/>
    </location>
</feature>
<feature type="sequence variant" id="VAR_032529" description="In dbSNP:rs2282192.">
    <original>V</original>
    <variation>M</variation>
    <location>
        <position position="324"/>
    </location>
</feature>
<feature type="sequence conflict" description="In Ref. 5; CAA60025." evidence="9" ref="5">
    <original>F</original>
    <variation>V</variation>
    <location>
        <position position="341"/>
    </location>
</feature>
<feature type="sequence conflict" description="In Ref. 1; BAA91013." evidence="9" ref="1">
    <original>G</original>
    <variation>D</variation>
    <location>
        <position position="358"/>
    </location>
</feature>
<reference key="1">
    <citation type="journal article" date="2004" name="Nat. Genet.">
        <title>Complete sequencing and characterization of 21,243 full-length human cDNAs.</title>
        <authorList>
            <person name="Ota T."/>
            <person name="Suzuki Y."/>
            <person name="Nishikawa T."/>
            <person name="Otsuki T."/>
            <person name="Sugiyama T."/>
            <person name="Irie R."/>
            <person name="Wakamatsu A."/>
            <person name="Hayashi K."/>
            <person name="Sato H."/>
            <person name="Nagai K."/>
            <person name="Kimura K."/>
            <person name="Makita H."/>
            <person name="Sekine M."/>
            <person name="Obayashi M."/>
            <person name="Nishi T."/>
            <person name="Shibahara T."/>
            <person name="Tanaka T."/>
            <person name="Ishii S."/>
            <person name="Yamamoto J."/>
            <person name="Saito K."/>
            <person name="Kawai Y."/>
            <person name="Isono Y."/>
            <person name="Nakamura Y."/>
            <person name="Nagahari K."/>
            <person name="Murakami K."/>
            <person name="Yasuda T."/>
            <person name="Iwayanagi T."/>
            <person name="Wagatsuma M."/>
            <person name="Shiratori A."/>
            <person name="Sudo H."/>
            <person name="Hosoiri T."/>
            <person name="Kaku Y."/>
            <person name="Kodaira H."/>
            <person name="Kondo H."/>
            <person name="Sugawara M."/>
            <person name="Takahashi M."/>
            <person name="Kanda K."/>
            <person name="Yokoi T."/>
            <person name="Furuya T."/>
            <person name="Kikkawa E."/>
            <person name="Omura Y."/>
            <person name="Abe K."/>
            <person name="Kamihara K."/>
            <person name="Katsuta N."/>
            <person name="Sato K."/>
            <person name="Tanikawa M."/>
            <person name="Yamazaki M."/>
            <person name="Ninomiya K."/>
            <person name="Ishibashi T."/>
            <person name="Yamashita H."/>
            <person name="Murakawa K."/>
            <person name="Fujimori K."/>
            <person name="Tanai H."/>
            <person name="Kimata M."/>
            <person name="Watanabe M."/>
            <person name="Hiraoka S."/>
            <person name="Chiba Y."/>
            <person name="Ishida S."/>
            <person name="Ono Y."/>
            <person name="Takiguchi S."/>
            <person name="Watanabe S."/>
            <person name="Yosida M."/>
            <person name="Hotuta T."/>
            <person name="Kusano J."/>
            <person name="Kanehori K."/>
            <person name="Takahashi-Fujii A."/>
            <person name="Hara H."/>
            <person name="Tanase T.-O."/>
            <person name="Nomura Y."/>
            <person name="Togiya S."/>
            <person name="Komai F."/>
            <person name="Hara R."/>
            <person name="Takeuchi K."/>
            <person name="Arita M."/>
            <person name="Imose N."/>
            <person name="Musashino K."/>
            <person name="Yuuki H."/>
            <person name="Oshima A."/>
            <person name="Sasaki N."/>
            <person name="Aotsuka S."/>
            <person name="Yoshikawa Y."/>
            <person name="Matsunawa H."/>
            <person name="Ichihara T."/>
            <person name="Shiohata N."/>
            <person name="Sano S."/>
            <person name="Moriya S."/>
            <person name="Momiyama H."/>
            <person name="Satoh N."/>
            <person name="Takami S."/>
            <person name="Terashima Y."/>
            <person name="Suzuki O."/>
            <person name="Nakagawa S."/>
            <person name="Senoh A."/>
            <person name="Mizoguchi H."/>
            <person name="Goto Y."/>
            <person name="Shimizu F."/>
            <person name="Wakebe H."/>
            <person name="Hishigaki H."/>
            <person name="Watanabe T."/>
            <person name="Sugiyama A."/>
            <person name="Takemoto M."/>
            <person name="Kawakami B."/>
            <person name="Yamazaki M."/>
            <person name="Watanabe K."/>
            <person name="Kumagai A."/>
            <person name="Itakura S."/>
            <person name="Fukuzumi Y."/>
            <person name="Fujimori Y."/>
            <person name="Komiyama M."/>
            <person name="Tashiro H."/>
            <person name="Tanigami A."/>
            <person name="Fujiwara T."/>
            <person name="Ono T."/>
            <person name="Yamada K."/>
            <person name="Fujii Y."/>
            <person name="Ozaki K."/>
            <person name="Hirao M."/>
            <person name="Ohmori Y."/>
            <person name="Kawabata A."/>
            <person name="Hikiji T."/>
            <person name="Kobatake N."/>
            <person name="Inagaki H."/>
            <person name="Ikema Y."/>
            <person name="Okamoto S."/>
            <person name="Okitani R."/>
            <person name="Kawakami T."/>
            <person name="Noguchi S."/>
            <person name="Itoh T."/>
            <person name="Shigeta K."/>
            <person name="Senba T."/>
            <person name="Matsumura K."/>
            <person name="Nakajima Y."/>
            <person name="Mizuno T."/>
            <person name="Morinaga M."/>
            <person name="Sasaki M."/>
            <person name="Togashi T."/>
            <person name="Oyama M."/>
            <person name="Hata H."/>
            <person name="Watanabe M."/>
            <person name="Komatsu T."/>
            <person name="Mizushima-Sugano J."/>
            <person name="Satoh T."/>
            <person name="Shirai Y."/>
            <person name="Takahashi Y."/>
            <person name="Nakagawa K."/>
            <person name="Okumura K."/>
            <person name="Nagase T."/>
            <person name="Nomura N."/>
            <person name="Kikuchi H."/>
            <person name="Masuho Y."/>
            <person name="Yamashita R."/>
            <person name="Nakai K."/>
            <person name="Yada T."/>
            <person name="Nakamura Y."/>
            <person name="Ohara O."/>
            <person name="Isogai T."/>
            <person name="Sugano S."/>
        </authorList>
    </citation>
    <scope>NUCLEOTIDE SEQUENCE [LARGE SCALE MRNA]</scope>
    <scope>VARIANT PRO-7</scope>
    <source>
        <tissue>Colon mucosa</tissue>
    </source>
</reference>
<reference key="2">
    <citation type="journal article" date="2004" name="Nature">
        <title>DNA sequence and analysis of human chromosome 9.</title>
        <authorList>
            <person name="Humphray S.J."/>
            <person name="Oliver K."/>
            <person name="Hunt A.R."/>
            <person name="Plumb R.W."/>
            <person name="Loveland J.E."/>
            <person name="Howe K.L."/>
            <person name="Andrews T.D."/>
            <person name="Searle S."/>
            <person name="Hunt S.E."/>
            <person name="Scott C.E."/>
            <person name="Jones M.C."/>
            <person name="Ainscough R."/>
            <person name="Almeida J.P."/>
            <person name="Ambrose K.D."/>
            <person name="Ashwell R.I.S."/>
            <person name="Babbage A.K."/>
            <person name="Babbage S."/>
            <person name="Bagguley C.L."/>
            <person name="Bailey J."/>
            <person name="Banerjee R."/>
            <person name="Barker D.J."/>
            <person name="Barlow K.F."/>
            <person name="Bates K."/>
            <person name="Beasley H."/>
            <person name="Beasley O."/>
            <person name="Bird C.P."/>
            <person name="Bray-Allen S."/>
            <person name="Brown A.J."/>
            <person name="Brown J.Y."/>
            <person name="Burford D."/>
            <person name="Burrill W."/>
            <person name="Burton J."/>
            <person name="Carder C."/>
            <person name="Carter N.P."/>
            <person name="Chapman J.C."/>
            <person name="Chen Y."/>
            <person name="Clarke G."/>
            <person name="Clark S.Y."/>
            <person name="Clee C.M."/>
            <person name="Clegg S."/>
            <person name="Collier R.E."/>
            <person name="Corby N."/>
            <person name="Crosier M."/>
            <person name="Cummings A.T."/>
            <person name="Davies J."/>
            <person name="Dhami P."/>
            <person name="Dunn M."/>
            <person name="Dutta I."/>
            <person name="Dyer L.W."/>
            <person name="Earthrowl M.E."/>
            <person name="Faulkner L."/>
            <person name="Fleming C.J."/>
            <person name="Frankish A."/>
            <person name="Frankland J.A."/>
            <person name="French L."/>
            <person name="Fricker D.G."/>
            <person name="Garner P."/>
            <person name="Garnett J."/>
            <person name="Ghori J."/>
            <person name="Gilbert J.G.R."/>
            <person name="Glison C."/>
            <person name="Grafham D.V."/>
            <person name="Gribble S."/>
            <person name="Griffiths C."/>
            <person name="Griffiths-Jones S."/>
            <person name="Grocock R."/>
            <person name="Guy J."/>
            <person name="Hall R.E."/>
            <person name="Hammond S."/>
            <person name="Harley J.L."/>
            <person name="Harrison E.S.I."/>
            <person name="Hart E.A."/>
            <person name="Heath P.D."/>
            <person name="Henderson C.D."/>
            <person name="Hopkins B.L."/>
            <person name="Howard P.J."/>
            <person name="Howden P.J."/>
            <person name="Huckle E."/>
            <person name="Johnson C."/>
            <person name="Johnson D."/>
            <person name="Joy A.A."/>
            <person name="Kay M."/>
            <person name="Keenan S."/>
            <person name="Kershaw J.K."/>
            <person name="Kimberley A.M."/>
            <person name="King A."/>
            <person name="Knights A."/>
            <person name="Laird G.K."/>
            <person name="Langford C."/>
            <person name="Lawlor S."/>
            <person name="Leongamornlert D.A."/>
            <person name="Leversha M."/>
            <person name="Lloyd C."/>
            <person name="Lloyd D.M."/>
            <person name="Lovell J."/>
            <person name="Martin S."/>
            <person name="Mashreghi-Mohammadi M."/>
            <person name="Matthews L."/>
            <person name="McLaren S."/>
            <person name="McLay K.E."/>
            <person name="McMurray A."/>
            <person name="Milne S."/>
            <person name="Nickerson T."/>
            <person name="Nisbett J."/>
            <person name="Nordsiek G."/>
            <person name="Pearce A.V."/>
            <person name="Peck A.I."/>
            <person name="Porter K.M."/>
            <person name="Pandian R."/>
            <person name="Pelan S."/>
            <person name="Phillimore B."/>
            <person name="Povey S."/>
            <person name="Ramsey Y."/>
            <person name="Rand V."/>
            <person name="Scharfe M."/>
            <person name="Sehra H.K."/>
            <person name="Shownkeen R."/>
            <person name="Sims S.K."/>
            <person name="Skuce C.D."/>
            <person name="Smith M."/>
            <person name="Steward C.A."/>
            <person name="Swarbreck D."/>
            <person name="Sycamore N."/>
            <person name="Tester J."/>
            <person name="Thorpe A."/>
            <person name="Tracey A."/>
            <person name="Tromans A."/>
            <person name="Thomas D.W."/>
            <person name="Wall M."/>
            <person name="Wallis J.M."/>
            <person name="West A.P."/>
            <person name="Whitehead S.L."/>
            <person name="Willey D.L."/>
            <person name="Williams S.A."/>
            <person name="Wilming L."/>
            <person name="Wray P.W."/>
            <person name="Young L."/>
            <person name="Ashurst J.L."/>
            <person name="Coulson A."/>
            <person name="Blocker H."/>
            <person name="Durbin R.M."/>
            <person name="Sulston J.E."/>
            <person name="Hubbard T."/>
            <person name="Jackson M.J."/>
            <person name="Bentley D.R."/>
            <person name="Beck S."/>
            <person name="Rogers J."/>
            <person name="Dunham I."/>
        </authorList>
    </citation>
    <scope>NUCLEOTIDE SEQUENCE [LARGE SCALE GENOMIC DNA]</scope>
</reference>
<reference key="3">
    <citation type="journal article" date="2004" name="Genome Res.">
        <title>The status, quality, and expansion of the NIH full-length cDNA project: the Mammalian Gene Collection (MGC).</title>
        <authorList>
            <consortium name="The MGC Project Team"/>
        </authorList>
    </citation>
    <scope>NUCLEOTIDE SEQUENCE [LARGE SCALE MRNA]</scope>
    <scope>VARIANT PRO-7</scope>
    <source>
        <tissue>Lung</tissue>
    </source>
</reference>
<reference key="4">
    <citation type="journal article" date="2000" name="Genome Res.">
        <title>Cloning and functional analysis of cDNAs with open reading frames for 300 previously undefined genes expressed in CD34+ hematopoietic stem/progenitor cells.</title>
        <authorList>
            <person name="Zhang Q.-H."/>
            <person name="Ye M."/>
            <person name="Wu X.-Y."/>
            <person name="Ren S.-X."/>
            <person name="Zhao M."/>
            <person name="Zhao C.-J."/>
            <person name="Fu G."/>
            <person name="Shen Y."/>
            <person name="Fan H.-Y."/>
            <person name="Lu G."/>
            <person name="Zhong M."/>
            <person name="Xu X.-R."/>
            <person name="Han Z.-G."/>
            <person name="Zhang J.-W."/>
            <person name="Tao J."/>
            <person name="Huang Q.-H."/>
            <person name="Zhou J."/>
            <person name="Hu G.-X."/>
            <person name="Gu J."/>
            <person name="Chen S.-J."/>
            <person name="Chen Z."/>
        </authorList>
    </citation>
    <scope>NUCLEOTIDE SEQUENCE [LARGE SCALE MRNA] OF 1-241</scope>
    <source>
        <tissue>Umbilical cord blood</tissue>
    </source>
</reference>
<reference key="5">
    <citation type="journal article" date="1997" name="J. Biol. Chem.">
        <title>Binding of HIV-1 Nef to a novel thioesterase enzyme correlates with Nef-mediated CD4 down-regulation.</title>
        <authorList>
            <person name="Liu L.X."/>
            <person name="Margottin F."/>
            <person name="Le Gall S."/>
            <person name="Schwartz O."/>
            <person name="Selig L."/>
            <person name="Benarous R."/>
            <person name="Benichou S."/>
        </authorList>
    </citation>
    <scope>NUCLEOTIDE SEQUENCE [MRNA] OF 218-441</scope>
    <source>
        <tissue>Lymphocyte</tissue>
    </source>
</reference>
<reference key="6">
    <citation type="journal article" date="2014" name="Nucleic Acids Res.">
        <title>Discovery of the beta-barrel-type RNA methyltransferase responsible for N6-methylation of N6-threonylcarbamoyladenosine in tRNAs.</title>
        <authorList>
            <person name="Kimura S."/>
            <person name="Miyauchi K."/>
            <person name="Ikeuchi Y."/>
            <person name="Thiaville P.C."/>
            <person name="Crecy-Lagard V.D."/>
            <person name="Suzuki T."/>
        </authorList>
    </citation>
    <scope>FUNCTION</scope>
    <scope>CATALYTIC ACTIVITY</scope>
</reference>
<comment type="function">
    <text evidence="2 7">S-adenosyl-L-methionine-dependent methyltransferase responsible for the addition of the methyl group in the formation of N6-methyl-N6-threonylcarbamoyladenosine at position 37 (m(6)t(6)A37) of the tRNA anticodon loop of tRNA(Ser)(GCU) (PubMed:25063302). The methyl group of m(6)t(6)A37 may improve the efficiency of the tRNA decoding ability (By similarity).</text>
</comment>
<comment type="catalytic activity">
    <reaction evidence="10">
        <text>N(6)-L-threonylcarbamoyladenosine(37) in tRNA + S-adenosyl-L-methionine = N(6)-methyl,N(6)-L-threonylcarbamoyladenosine(37) in tRNA + S-adenosyl-L-homocysteine + H(+)</text>
        <dbReference type="Rhea" id="RHEA:70027"/>
        <dbReference type="Rhea" id="RHEA-COMP:10163"/>
        <dbReference type="Rhea" id="RHEA-COMP:17808"/>
        <dbReference type="ChEBI" id="CHEBI:15378"/>
        <dbReference type="ChEBI" id="CHEBI:57856"/>
        <dbReference type="ChEBI" id="CHEBI:59789"/>
        <dbReference type="ChEBI" id="CHEBI:74418"/>
        <dbReference type="ChEBI" id="CHEBI:188470"/>
    </reaction>
    <physiologicalReaction direction="left-to-right" evidence="10">
        <dbReference type="Rhea" id="RHEA:70028"/>
    </physiologicalReaction>
</comment>
<comment type="interaction">
    <interactant intactId="EBI-2652818">
        <id>Q9BU70</id>
    </interactant>
    <interactant intactId="EBI-11995806">
        <id>Q9H0A9-2</id>
        <label>SPATC1L</label>
    </interactant>
    <organismsDiffer>false</organismsDiffer>
    <experiments>5</experiments>
</comment>
<comment type="similarity">
    <text evidence="9">Belongs to the tRNA methyltransferase O family.</text>
</comment>
<comment type="sequence caution" evidence="9">
    <conflict type="frameshift">
        <sequence resource="EMBL-CDS" id="AAF36139"/>
    </conflict>
</comment>
<comment type="sequence caution" evidence="9">
    <conflict type="miscellaneous discrepancy">
        <sequence resource="EMBL-CDS" id="AAF36139"/>
    </conflict>
    <text>Contaminating sequence.</text>
</comment>
<evidence type="ECO:0000250" key="1">
    <source>
        <dbReference type="UniProtKB" id="O29998"/>
    </source>
</evidence>
<evidence type="ECO:0000250" key="2">
    <source>
        <dbReference type="UniProtKB" id="P28634"/>
    </source>
</evidence>
<evidence type="ECO:0000255" key="3">
    <source>
        <dbReference type="PROSITE-ProRule" id="PRU01003"/>
    </source>
</evidence>
<evidence type="ECO:0000256" key="4">
    <source>
        <dbReference type="SAM" id="MobiDB-lite"/>
    </source>
</evidence>
<evidence type="ECO:0000269" key="5">
    <source>
    </source>
</evidence>
<evidence type="ECO:0000269" key="6">
    <source>
    </source>
</evidence>
<evidence type="ECO:0000269" key="7">
    <source>
    </source>
</evidence>
<evidence type="ECO:0000303" key="8">
    <source>
    </source>
</evidence>
<evidence type="ECO:0000305" key="9"/>
<evidence type="ECO:0000305" key="10">
    <source>
    </source>
</evidence>
<evidence type="ECO:0000312" key="11">
    <source>
        <dbReference type="HGNC" id="HGNC:30967"/>
    </source>
</evidence>